<accession>P49731</accession>
<accession>Q9P7R7</accession>
<comment type="function">
    <text evidence="1">Acts as a component of the mcm2-7 complex (mcm complex) which is the putative replicative helicase essential for 'once per cell cycle' DNA replication initiation and elongation in eukaryotic cells. The active ATPase sites in the mcm2-7 ring are formed through the interaction surfaces of two neighboring subunits such that a critical structure of a conserved arginine finger motif is provided in trans relative to the ATP-binding site of the Walker A box of the adjacent subunit. The six ATPase active sites, however, are likely to contribute differentially to the complex helicase activity (By similarity).</text>
</comment>
<comment type="catalytic activity">
    <reaction>
        <text>ATP + H2O = ADP + phosphate + H(+)</text>
        <dbReference type="Rhea" id="RHEA:13065"/>
        <dbReference type="ChEBI" id="CHEBI:15377"/>
        <dbReference type="ChEBI" id="CHEBI:15378"/>
        <dbReference type="ChEBI" id="CHEBI:30616"/>
        <dbReference type="ChEBI" id="CHEBI:43474"/>
        <dbReference type="ChEBI" id="CHEBI:456216"/>
        <dbReference type="EC" id="3.6.4.12"/>
    </reaction>
</comment>
<comment type="subunit">
    <text evidence="4 5 7">Component of the mcm2-7 complex. The complex forms a toroidal hexameric ring with the proposed subunit order mcm2-mcm6-mcm4-mcm7-mcm3-mcm5 (Probable). The heterodimers of mcm4/mcm6 and mcm3/mcm5 interact with mcm2 and mcm7. Interacts with sld3.</text>
</comment>
<comment type="interaction">
    <interactant intactId="EBI-913838">
        <id>P49731</id>
    </interactant>
    <interactant intactId="EBI-7492115">
        <id>O94450</id>
        <label>SPAC1687.04</label>
    </interactant>
    <organismsDiffer>false</organismsDiffer>
    <experiments>2</experiments>
</comment>
<comment type="subcellular location">
    <subcellularLocation>
        <location evidence="7">Nucleus</location>
    </subcellularLocation>
</comment>
<comment type="similarity">
    <text evidence="7">Belongs to the MCM family.</text>
</comment>
<comment type="sequence caution" evidence="7">
    <conflict type="frameshift">
        <sequence resource="EMBL-CDS" id="BAA06729"/>
    </conflict>
</comment>
<evidence type="ECO:0000250" key="1"/>
<evidence type="ECO:0000255" key="2"/>
<evidence type="ECO:0000256" key="3">
    <source>
        <dbReference type="SAM" id="MobiDB-lite"/>
    </source>
</evidence>
<evidence type="ECO:0000269" key="4">
    <source>
    </source>
</evidence>
<evidence type="ECO:0000269" key="5">
    <source>
    </source>
</evidence>
<evidence type="ECO:0000269" key="6">
    <source>
    </source>
</evidence>
<evidence type="ECO:0000305" key="7"/>
<organism>
    <name type="scientific">Schizosaccharomyces pombe (strain 972 / ATCC 24843)</name>
    <name type="common">Fission yeast</name>
    <dbReference type="NCBI Taxonomy" id="284812"/>
    <lineage>
        <taxon>Eukaryota</taxon>
        <taxon>Fungi</taxon>
        <taxon>Dikarya</taxon>
        <taxon>Ascomycota</taxon>
        <taxon>Taphrinomycotina</taxon>
        <taxon>Schizosaccharomycetes</taxon>
        <taxon>Schizosaccharomycetales</taxon>
        <taxon>Schizosaccharomycetaceae</taxon>
        <taxon>Schizosaccharomyces</taxon>
    </lineage>
</organism>
<gene>
    <name type="primary">mcm6</name>
    <name type="synonym">mis5</name>
    <name type="ORF">SPBC211.04c</name>
</gene>
<feature type="chain" id="PRO_0000194118" description="DNA replication licensing factor mcm6">
    <location>
        <begin position="1"/>
        <end position="892"/>
    </location>
</feature>
<feature type="domain" description="MCM">
    <location>
        <begin position="426"/>
        <end position="633"/>
    </location>
</feature>
<feature type="region of interest" description="Disordered" evidence="3">
    <location>
        <begin position="748"/>
        <end position="774"/>
    </location>
</feature>
<feature type="short sequence motif" description="Arginine finger">
    <location>
        <begin position="608"/>
        <end position="611"/>
    </location>
</feature>
<feature type="compositionally biased region" description="Acidic residues" evidence="3">
    <location>
        <begin position="748"/>
        <end position="758"/>
    </location>
</feature>
<feature type="compositionally biased region" description="Low complexity" evidence="3">
    <location>
        <begin position="759"/>
        <end position="769"/>
    </location>
</feature>
<feature type="binding site" evidence="2">
    <location>
        <begin position="476"/>
        <end position="483"/>
    </location>
    <ligand>
        <name>ATP</name>
        <dbReference type="ChEBI" id="CHEBI:30616"/>
    </ligand>
</feature>
<feature type="modified residue" description="Phosphoserine" evidence="6">
    <location>
        <position position="96"/>
    </location>
</feature>
<feature type="modified residue" description="Phosphoserine" evidence="6">
    <location>
        <position position="98"/>
    </location>
</feature>
<sequence length="892" mass="99550">MSSLASQGNNASTPAYRYGFQTSEVGDRPTVSMPSQPESSAMLEDDGMVKRKPFAAIGEAIPKVIDTTGESVREAFEEFLLSFSDDRVAGGDALPSASQEKYYVQQIHGLAMYEIHTVYVDYKHLTSYNDVLALAIVEQYYRFSPFLLRALQKLIEKFEPEYYRSSLSRENASLSPNFKASDKTFALAFYNLPFRSTIRDLRTDRIGRLTTITGTVTRTSEVRPELAQGTFICEECHTVVSNVEQAFRYTEPTQCPNELCANKRSWRLNISQSSFQDWQKVRIQENSNEIPTGSMPRTLDVILRGDIVERAKAGDKCAFTGILIAVPDVSQLGIPGVKPEAYRDSRNFGGRDADGVTGLKSLGVRDLTYKLSFLACMVQPDDANDKSGADVRGDGSQGIEEQDEFLQSLSQEEIDDLRAMVHSDHIYSRLTNSLAPSVYGHEIIKKGILLQLMGGVHKLTPEGINLRGDLNICIVGDPSTSKSQFLKYVCNFLPRAIYTSGKASSAAGLTAAVVKDEETGDFTIEAGALMLADNGICAIDEFDKMDLSDQVAIHEAMEQQTISIAKAGIQATLNARTSILAAANPIGGRYNRKTTLRNNINMSAPIMSRFDLFFVVLDECNESVDRHLAKHIVDIHRLRDDAMQPEFSTEQLQRYIRYARTFKPKLNTESCAEIVKKYKQLRMDDAQGAGKNSYRITVRQLESMIRLSEAIARANCVDDITPAFVNEAYSLLRQSIIHVERDDIEVEEDDAEAQELENDNTNTTNGNDNVSSEEALQKPKVKITYDKYVSIMNGILQVLRQRSTEGVDGVPAGDLVQSYLELREDQFHTEEDIIYEVGLVRKVLTRLVHESIIMEIQNLTDSAVRLPFEERVFSIHPNCDIDALLSNGDVPN</sequence>
<dbReference type="EC" id="3.6.4.12"/>
<dbReference type="EMBL" id="D31960">
    <property type="protein sequence ID" value="BAA06729.1"/>
    <property type="status" value="ALT_FRAME"/>
    <property type="molecule type" value="Genomic_DNA"/>
</dbReference>
<dbReference type="EMBL" id="CU329671">
    <property type="protein sequence ID" value="CAB75412.1"/>
    <property type="molecule type" value="Genomic_DNA"/>
</dbReference>
<dbReference type="PIR" id="T43423">
    <property type="entry name" value="T43423"/>
</dbReference>
<dbReference type="PIR" id="T50339">
    <property type="entry name" value="T50339"/>
</dbReference>
<dbReference type="RefSeq" id="NP_596614.1">
    <property type="nucleotide sequence ID" value="NM_001022535.2"/>
</dbReference>
<dbReference type="SMR" id="P49731"/>
<dbReference type="BioGRID" id="277303">
    <property type="interactions" value="27"/>
</dbReference>
<dbReference type="ComplexPortal" id="CPX-2945">
    <property type="entry name" value="MCM complex"/>
</dbReference>
<dbReference type="FunCoup" id="P49731">
    <property type="interactions" value="727"/>
</dbReference>
<dbReference type="IntAct" id="P49731">
    <property type="interactions" value="9"/>
</dbReference>
<dbReference type="MINT" id="P49731"/>
<dbReference type="STRING" id="284812.P49731"/>
<dbReference type="iPTMnet" id="P49731"/>
<dbReference type="PaxDb" id="4896-SPBC211.04c.1"/>
<dbReference type="EnsemblFungi" id="SPBC211.04c.1">
    <property type="protein sequence ID" value="SPBC211.04c.1:pep"/>
    <property type="gene ID" value="SPBC211.04c"/>
</dbReference>
<dbReference type="GeneID" id="2540784"/>
<dbReference type="KEGG" id="spo:2540784"/>
<dbReference type="PomBase" id="SPBC211.04c">
    <property type="gene designation" value="mcm6"/>
</dbReference>
<dbReference type="VEuPathDB" id="FungiDB:SPBC211.04c"/>
<dbReference type="eggNOG" id="KOG0480">
    <property type="taxonomic scope" value="Eukaryota"/>
</dbReference>
<dbReference type="HOGENOM" id="CLU_000995_3_2_1"/>
<dbReference type="InParanoid" id="P49731"/>
<dbReference type="OMA" id="RHQQTDK"/>
<dbReference type="PhylomeDB" id="P49731"/>
<dbReference type="Reactome" id="R-SPO-176187">
    <property type="pathway name" value="Activation of ATR in response to replication stress"/>
</dbReference>
<dbReference type="Reactome" id="R-SPO-68867">
    <property type="pathway name" value="Assembly of the pre-replicative complex"/>
</dbReference>
<dbReference type="Reactome" id="R-SPO-68949">
    <property type="pathway name" value="Orc1 removal from chromatin"/>
</dbReference>
<dbReference type="Reactome" id="R-SPO-68962">
    <property type="pathway name" value="Activation of the pre-replicative complex"/>
</dbReference>
<dbReference type="Reactome" id="R-SPO-69052">
    <property type="pathway name" value="Switching of origins to a post-replicative state"/>
</dbReference>
<dbReference type="PRO" id="PR:P49731"/>
<dbReference type="Proteomes" id="UP000002485">
    <property type="component" value="Chromosome II"/>
</dbReference>
<dbReference type="GO" id="GO:0000785">
    <property type="term" value="C:chromatin"/>
    <property type="evidence" value="ECO:0000314"/>
    <property type="project" value="PomBase"/>
</dbReference>
<dbReference type="GO" id="GO:0005829">
    <property type="term" value="C:cytosol"/>
    <property type="evidence" value="ECO:0007005"/>
    <property type="project" value="PomBase"/>
</dbReference>
<dbReference type="GO" id="GO:0031261">
    <property type="term" value="C:DNA replication preinitiation complex"/>
    <property type="evidence" value="ECO:0000305"/>
    <property type="project" value="PomBase"/>
</dbReference>
<dbReference type="GO" id="GO:0042555">
    <property type="term" value="C:MCM complex"/>
    <property type="evidence" value="ECO:0000314"/>
    <property type="project" value="PomBase"/>
</dbReference>
<dbReference type="GO" id="GO:0097373">
    <property type="term" value="C:MCM core complex"/>
    <property type="evidence" value="ECO:0000314"/>
    <property type="project" value="PomBase"/>
</dbReference>
<dbReference type="GO" id="GO:0005656">
    <property type="term" value="C:nuclear pre-replicative complex"/>
    <property type="evidence" value="ECO:0000305"/>
    <property type="project" value="PomBase"/>
</dbReference>
<dbReference type="GO" id="GO:0043596">
    <property type="term" value="C:nuclear replication fork"/>
    <property type="evidence" value="ECO:0000305"/>
    <property type="project" value="PomBase"/>
</dbReference>
<dbReference type="GO" id="GO:0005634">
    <property type="term" value="C:nucleus"/>
    <property type="evidence" value="ECO:0000314"/>
    <property type="project" value="PomBase"/>
</dbReference>
<dbReference type="GO" id="GO:0005524">
    <property type="term" value="F:ATP binding"/>
    <property type="evidence" value="ECO:0007669"/>
    <property type="project" value="UniProtKB-KW"/>
</dbReference>
<dbReference type="GO" id="GO:0016887">
    <property type="term" value="F:ATP hydrolysis activity"/>
    <property type="evidence" value="ECO:0007669"/>
    <property type="project" value="RHEA"/>
</dbReference>
<dbReference type="GO" id="GO:0003677">
    <property type="term" value="F:DNA binding"/>
    <property type="evidence" value="ECO:0007669"/>
    <property type="project" value="UniProtKB-KW"/>
</dbReference>
<dbReference type="GO" id="GO:0003678">
    <property type="term" value="F:DNA helicase activity"/>
    <property type="evidence" value="ECO:0007669"/>
    <property type="project" value="InterPro"/>
</dbReference>
<dbReference type="GO" id="GO:0006260">
    <property type="term" value="P:DNA replication"/>
    <property type="evidence" value="ECO:0000318"/>
    <property type="project" value="GO_Central"/>
</dbReference>
<dbReference type="GO" id="GO:0000727">
    <property type="term" value="P:double-strand break repair via break-induced replication"/>
    <property type="evidence" value="ECO:0000318"/>
    <property type="project" value="GO_Central"/>
</dbReference>
<dbReference type="GO" id="GO:0000724">
    <property type="term" value="P:double-strand break repair via homologous recombination"/>
    <property type="evidence" value="ECO:0000315"/>
    <property type="project" value="PomBase"/>
</dbReference>
<dbReference type="GO" id="GO:1902969">
    <property type="term" value="P:mitotic DNA replication"/>
    <property type="evidence" value="ECO:0000315"/>
    <property type="project" value="PomBase"/>
</dbReference>
<dbReference type="GO" id="GO:1902975">
    <property type="term" value="P:mitotic DNA replication initiation"/>
    <property type="evidence" value="ECO:0000269"/>
    <property type="project" value="PomBase"/>
</dbReference>
<dbReference type="GO" id="GO:0006279">
    <property type="term" value="P:premeiotic DNA replication"/>
    <property type="evidence" value="ECO:0000314"/>
    <property type="project" value="ComplexPortal"/>
</dbReference>
<dbReference type="CDD" id="cd17757">
    <property type="entry name" value="MCM6"/>
    <property type="match status" value="1"/>
</dbReference>
<dbReference type="FunFam" id="1.20.58.870:FF:000002">
    <property type="entry name" value="DNA helicase"/>
    <property type="match status" value="1"/>
</dbReference>
<dbReference type="FunFam" id="2.20.28.10:FF:000003">
    <property type="entry name" value="DNA helicase"/>
    <property type="match status" value="1"/>
</dbReference>
<dbReference type="FunFam" id="3.40.50.300:FF:000115">
    <property type="entry name" value="DNA helicase"/>
    <property type="match status" value="1"/>
</dbReference>
<dbReference type="Gene3D" id="1.20.58.870">
    <property type="match status" value="1"/>
</dbReference>
<dbReference type="Gene3D" id="2.20.28.10">
    <property type="match status" value="1"/>
</dbReference>
<dbReference type="Gene3D" id="3.30.1640.10">
    <property type="entry name" value="mini-chromosome maintenance (MCM) complex, chain A, domain 1"/>
    <property type="match status" value="1"/>
</dbReference>
<dbReference type="Gene3D" id="2.40.50.140">
    <property type="entry name" value="Nucleic acid-binding proteins"/>
    <property type="match status" value="1"/>
</dbReference>
<dbReference type="Gene3D" id="3.40.50.300">
    <property type="entry name" value="P-loop containing nucleotide triphosphate hydrolases"/>
    <property type="match status" value="1"/>
</dbReference>
<dbReference type="InterPro" id="IPR031327">
    <property type="entry name" value="MCM"/>
</dbReference>
<dbReference type="InterPro" id="IPR008049">
    <property type="entry name" value="MCM6"/>
</dbReference>
<dbReference type="InterPro" id="IPR041024">
    <property type="entry name" value="Mcm6_C"/>
</dbReference>
<dbReference type="InterPro" id="IPR018525">
    <property type="entry name" value="MCM_CS"/>
</dbReference>
<dbReference type="InterPro" id="IPR001208">
    <property type="entry name" value="MCM_dom"/>
</dbReference>
<dbReference type="InterPro" id="IPR041562">
    <property type="entry name" value="MCM_lid"/>
</dbReference>
<dbReference type="InterPro" id="IPR027925">
    <property type="entry name" value="MCM_N"/>
</dbReference>
<dbReference type="InterPro" id="IPR033762">
    <property type="entry name" value="MCM_OB"/>
</dbReference>
<dbReference type="InterPro" id="IPR012340">
    <property type="entry name" value="NA-bd_OB-fold"/>
</dbReference>
<dbReference type="InterPro" id="IPR027417">
    <property type="entry name" value="P-loop_NTPase"/>
</dbReference>
<dbReference type="PANTHER" id="PTHR11630">
    <property type="entry name" value="DNA REPLICATION LICENSING FACTOR MCM FAMILY MEMBER"/>
    <property type="match status" value="1"/>
</dbReference>
<dbReference type="PANTHER" id="PTHR11630:SF43">
    <property type="entry name" value="DNA REPLICATION LICENSING FACTOR MCM6"/>
    <property type="match status" value="1"/>
</dbReference>
<dbReference type="Pfam" id="PF00493">
    <property type="entry name" value="MCM"/>
    <property type="match status" value="1"/>
</dbReference>
<dbReference type="Pfam" id="PF18263">
    <property type="entry name" value="MCM6_C"/>
    <property type="match status" value="1"/>
</dbReference>
<dbReference type="Pfam" id="PF17855">
    <property type="entry name" value="MCM_lid"/>
    <property type="match status" value="1"/>
</dbReference>
<dbReference type="Pfam" id="PF14551">
    <property type="entry name" value="MCM_N"/>
    <property type="match status" value="1"/>
</dbReference>
<dbReference type="Pfam" id="PF17207">
    <property type="entry name" value="MCM_OB"/>
    <property type="match status" value="1"/>
</dbReference>
<dbReference type="PRINTS" id="PR01657">
    <property type="entry name" value="MCMFAMILY"/>
</dbReference>
<dbReference type="PRINTS" id="PR01662">
    <property type="entry name" value="MCMPROTEIN6"/>
</dbReference>
<dbReference type="SMART" id="SM00350">
    <property type="entry name" value="MCM"/>
    <property type="match status" value="1"/>
</dbReference>
<dbReference type="SUPFAM" id="SSF50249">
    <property type="entry name" value="Nucleic acid-binding proteins"/>
    <property type="match status" value="1"/>
</dbReference>
<dbReference type="SUPFAM" id="SSF52540">
    <property type="entry name" value="P-loop containing nucleoside triphosphate hydrolases"/>
    <property type="match status" value="1"/>
</dbReference>
<dbReference type="PROSITE" id="PS00847">
    <property type="entry name" value="MCM_1"/>
    <property type="match status" value="1"/>
</dbReference>
<dbReference type="PROSITE" id="PS50051">
    <property type="entry name" value="MCM_2"/>
    <property type="match status" value="1"/>
</dbReference>
<keyword id="KW-0067">ATP-binding</keyword>
<keyword id="KW-0131">Cell cycle</keyword>
<keyword id="KW-0235">DNA replication</keyword>
<keyword id="KW-0238">DNA-binding</keyword>
<keyword id="KW-0347">Helicase</keyword>
<keyword id="KW-0378">Hydrolase</keyword>
<keyword id="KW-0547">Nucleotide-binding</keyword>
<keyword id="KW-0539">Nucleus</keyword>
<keyword id="KW-0597">Phosphoprotein</keyword>
<keyword id="KW-1185">Reference proteome</keyword>
<name>MCM6_SCHPO</name>
<proteinExistence type="evidence at protein level"/>
<reference key="1">
    <citation type="journal article" date="1994" name="Mol. Biol. Cell">
        <title>Fission yeast minichromosome loss mutants mis cause lethal aneuploidy and replication abnormality.</title>
        <authorList>
            <person name="Takahashi K."/>
            <person name="Yamada H."/>
            <person name="Yanagida M."/>
        </authorList>
    </citation>
    <scope>NUCLEOTIDE SEQUENCE [GENOMIC DNA]</scope>
</reference>
<reference key="2">
    <citation type="journal article" date="2002" name="Nature">
        <title>The genome sequence of Schizosaccharomyces pombe.</title>
        <authorList>
            <person name="Wood V."/>
            <person name="Gwilliam R."/>
            <person name="Rajandream M.A."/>
            <person name="Lyne M.H."/>
            <person name="Lyne R."/>
            <person name="Stewart A."/>
            <person name="Sgouros J.G."/>
            <person name="Peat N."/>
            <person name="Hayles J."/>
            <person name="Baker S.G."/>
            <person name="Basham D."/>
            <person name="Bowman S."/>
            <person name="Brooks K."/>
            <person name="Brown D."/>
            <person name="Brown S."/>
            <person name="Chillingworth T."/>
            <person name="Churcher C.M."/>
            <person name="Collins M."/>
            <person name="Connor R."/>
            <person name="Cronin A."/>
            <person name="Davis P."/>
            <person name="Feltwell T."/>
            <person name="Fraser A."/>
            <person name="Gentles S."/>
            <person name="Goble A."/>
            <person name="Hamlin N."/>
            <person name="Harris D.E."/>
            <person name="Hidalgo J."/>
            <person name="Hodgson G."/>
            <person name="Holroyd S."/>
            <person name="Hornsby T."/>
            <person name="Howarth S."/>
            <person name="Huckle E.J."/>
            <person name="Hunt S."/>
            <person name="Jagels K."/>
            <person name="James K.D."/>
            <person name="Jones L."/>
            <person name="Jones M."/>
            <person name="Leather S."/>
            <person name="McDonald S."/>
            <person name="McLean J."/>
            <person name="Mooney P."/>
            <person name="Moule S."/>
            <person name="Mungall K.L."/>
            <person name="Murphy L.D."/>
            <person name="Niblett D."/>
            <person name="Odell C."/>
            <person name="Oliver K."/>
            <person name="O'Neil S."/>
            <person name="Pearson D."/>
            <person name="Quail M.A."/>
            <person name="Rabbinowitsch E."/>
            <person name="Rutherford K.M."/>
            <person name="Rutter S."/>
            <person name="Saunders D."/>
            <person name="Seeger K."/>
            <person name="Sharp S."/>
            <person name="Skelton J."/>
            <person name="Simmonds M.N."/>
            <person name="Squares R."/>
            <person name="Squares S."/>
            <person name="Stevens K."/>
            <person name="Taylor K."/>
            <person name="Taylor R.G."/>
            <person name="Tivey A."/>
            <person name="Walsh S.V."/>
            <person name="Warren T."/>
            <person name="Whitehead S."/>
            <person name="Woodward J.R."/>
            <person name="Volckaert G."/>
            <person name="Aert R."/>
            <person name="Robben J."/>
            <person name="Grymonprez B."/>
            <person name="Weltjens I."/>
            <person name="Vanstreels E."/>
            <person name="Rieger M."/>
            <person name="Schaefer M."/>
            <person name="Mueller-Auer S."/>
            <person name="Gabel C."/>
            <person name="Fuchs M."/>
            <person name="Duesterhoeft A."/>
            <person name="Fritzc C."/>
            <person name="Holzer E."/>
            <person name="Moestl D."/>
            <person name="Hilbert H."/>
            <person name="Borzym K."/>
            <person name="Langer I."/>
            <person name="Beck A."/>
            <person name="Lehrach H."/>
            <person name="Reinhardt R."/>
            <person name="Pohl T.M."/>
            <person name="Eger P."/>
            <person name="Zimmermann W."/>
            <person name="Wedler H."/>
            <person name="Wambutt R."/>
            <person name="Purnelle B."/>
            <person name="Goffeau A."/>
            <person name="Cadieu E."/>
            <person name="Dreano S."/>
            <person name="Gloux S."/>
            <person name="Lelaure V."/>
            <person name="Mottier S."/>
            <person name="Galibert F."/>
            <person name="Aves S.J."/>
            <person name="Xiang Z."/>
            <person name="Hunt C."/>
            <person name="Moore K."/>
            <person name="Hurst S.M."/>
            <person name="Lucas M."/>
            <person name="Rochet M."/>
            <person name="Gaillardin C."/>
            <person name="Tallada V.A."/>
            <person name="Garzon A."/>
            <person name="Thode G."/>
            <person name="Daga R.R."/>
            <person name="Cruzado L."/>
            <person name="Jimenez J."/>
            <person name="Sanchez M."/>
            <person name="del Rey F."/>
            <person name="Benito J."/>
            <person name="Dominguez A."/>
            <person name="Revuelta J.L."/>
            <person name="Moreno S."/>
            <person name="Armstrong J."/>
            <person name="Forsburg S.L."/>
            <person name="Cerutti L."/>
            <person name="Lowe T."/>
            <person name="McCombie W.R."/>
            <person name="Paulsen I."/>
            <person name="Potashkin J."/>
            <person name="Shpakovski G.V."/>
            <person name="Ussery D."/>
            <person name="Barrell B.G."/>
            <person name="Nurse P."/>
        </authorList>
    </citation>
    <scope>NUCLEOTIDE SEQUENCE [LARGE SCALE GENOMIC DNA]</scope>
    <source>
        <strain>972 / ATCC 24843</strain>
    </source>
</reference>
<reference key="3">
    <citation type="journal article" date="2001" name="Genetics">
        <title>Characterization of Schizosaccharomyces pombe mcm7(+) and cdc23(+) (MCM10) and interactions with replication checkpoints.</title>
        <authorList>
            <person name="Liang D.T."/>
            <person name="Forsburg S.L."/>
        </authorList>
    </citation>
    <scope>SUBUNIT</scope>
    <source>
        <strain>SP011</strain>
    </source>
</reference>
<reference key="4">
    <citation type="journal article" date="2002" name="Mol. Biol. Cell">
        <title>SpSld3 is required for loading and maintenance of SpCdc45 on chromatin in DNA replication in fission yeast.</title>
        <authorList>
            <person name="Nakajima R."/>
            <person name="Masukata H."/>
        </authorList>
    </citation>
    <scope>INTERACTION WITH SLD3</scope>
</reference>
<reference key="5">
    <citation type="journal article" date="2008" name="J. Proteome Res.">
        <title>Phosphoproteome analysis of fission yeast.</title>
        <authorList>
            <person name="Wilson-Grady J.T."/>
            <person name="Villen J."/>
            <person name="Gygi S.P."/>
        </authorList>
    </citation>
    <scope>PHOSPHORYLATION [LARGE SCALE ANALYSIS] AT SER-96 AND SER-98</scope>
    <scope>IDENTIFICATION BY MASS SPECTROMETRY</scope>
</reference>
<protein>
    <recommendedName>
        <fullName>DNA replication licensing factor mcm6</fullName>
        <ecNumber>3.6.4.12</ecNumber>
    </recommendedName>
    <alternativeName>
        <fullName>Minichromosome maintenance protein 6</fullName>
    </alternativeName>
</protein>